<dbReference type="EC" id="6.3.2.8" evidence="1"/>
<dbReference type="EMBL" id="CP000034">
    <property type="protein sequence ID" value="ABB60356.1"/>
    <property type="molecule type" value="Genomic_DNA"/>
</dbReference>
<dbReference type="RefSeq" id="WP_001096057.1">
    <property type="nucleotide sequence ID" value="NC_007606.1"/>
</dbReference>
<dbReference type="RefSeq" id="YP_401845.1">
    <property type="nucleotide sequence ID" value="NC_007606.1"/>
</dbReference>
<dbReference type="SMR" id="Q32K01"/>
<dbReference type="STRING" id="300267.SDY_0121"/>
<dbReference type="EnsemblBacteria" id="ABB60356">
    <property type="protein sequence ID" value="ABB60356"/>
    <property type="gene ID" value="SDY_0121"/>
</dbReference>
<dbReference type="KEGG" id="sdy:SDY_0121"/>
<dbReference type="PATRIC" id="fig|300267.13.peg.140"/>
<dbReference type="HOGENOM" id="CLU_028104_2_2_6"/>
<dbReference type="UniPathway" id="UPA00219"/>
<dbReference type="Proteomes" id="UP000002716">
    <property type="component" value="Chromosome"/>
</dbReference>
<dbReference type="GO" id="GO:0005737">
    <property type="term" value="C:cytoplasm"/>
    <property type="evidence" value="ECO:0007669"/>
    <property type="project" value="UniProtKB-SubCell"/>
</dbReference>
<dbReference type="GO" id="GO:0005524">
    <property type="term" value="F:ATP binding"/>
    <property type="evidence" value="ECO:0007669"/>
    <property type="project" value="UniProtKB-UniRule"/>
</dbReference>
<dbReference type="GO" id="GO:0008763">
    <property type="term" value="F:UDP-N-acetylmuramate-L-alanine ligase activity"/>
    <property type="evidence" value="ECO:0007669"/>
    <property type="project" value="UniProtKB-UniRule"/>
</dbReference>
<dbReference type="GO" id="GO:0051301">
    <property type="term" value="P:cell division"/>
    <property type="evidence" value="ECO:0007669"/>
    <property type="project" value="UniProtKB-KW"/>
</dbReference>
<dbReference type="GO" id="GO:0071555">
    <property type="term" value="P:cell wall organization"/>
    <property type="evidence" value="ECO:0007669"/>
    <property type="project" value="UniProtKB-KW"/>
</dbReference>
<dbReference type="GO" id="GO:0009252">
    <property type="term" value="P:peptidoglycan biosynthetic process"/>
    <property type="evidence" value="ECO:0007669"/>
    <property type="project" value="UniProtKB-UniRule"/>
</dbReference>
<dbReference type="GO" id="GO:0008360">
    <property type="term" value="P:regulation of cell shape"/>
    <property type="evidence" value="ECO:0007669"/>
    <property type="project" value="UniProtKB-KW"/>
</dbReference>
<dbReference type="FunFam" id="3.40.1190.10:FF:000001">
    <property type="entry name" value="UDP-N-acetylmuramate--L-alanine ligase"/>
    <property type="match status" value="1"/>
</dbReference>
<dbReference type="FunFam" id="3.40.50.720:FF:000046">
    <property type="entry name" value="UDP-N-acetylmuramate--L-alanine ligase"/>
    <property type="match status" value="1"/>
</dbReference>
<dbReference type="FunFam" id="3.90.190.20:FF:000001">
    <property type="entry name" value="UDP-N-acetylmuramate--L-alanine ligase"/>
    <property type="match status" value="1"/>
</dbReference>
<dbReference type="Gene3D" id="3.90.190.20">
    <property type="entry name" value="Mur ligase, C-terminal domain"/>
    <property type="match status" value="1"/>
</dbReference>
<dbReference type="Gene3D" id="3.40.1190.10">
    <property type="entry name" value="Mur-like, catalytic domain"/>
    <property type="match status" value="1"/>
</dbReference>
<dbReference type="Gene3D" id="3.40.50.720">
    <property type="entry name" value="NAD(P)-binding Rossmann-like Domain"/>
    <property type="match status" value="1"/>
</dbReference>
<dbReference type="HAMAP" id="MF_00046">
    <property type="entry name" value="MurC"/>
    <property type="match status" value="1"/>
</dbReference>
<dbReference type="InterPro" id="IPR036565">
    <property type="entry name" value="Mur-like_cat_sf"/>
</dbReference>
<dbReference type="InterPro" id="IPR004101">
    <property type="entry name" value="Mur_ligase_C"/>
</dbReference>
<dbReference type="InterPro" id="IPR036615">
    <property type="entry name" value="Mur_ligase_C_dom_sf"/>
</dbReference>
<dbReference type="InterPro" id="IPR013221">
    <property type="entry name" value="Mur_ligase_cen"/>
</dbReference>
<dbReference type="InterPro" id="IPR000713">
    <property type="entry name" value="Mur_ligase_N"/>
</dbReference>
<dbReference type="InterPro" id="IPR050061">
    <property type="entry name" value="MurCDEF_pg_biosynth"/>
</dbReference>
<dbReference type="InterPro" id="IPR005758">
    <property type="entry name" value="UDP-N-AcMur_Ala_ligase_MurC"/>
</dbReference>
<dbReference type="NCBIfam" id="TIGR01082">
    <property type="entry name" value="murC"/>
    <property type="match status" value="1"/>
</dbReference>
<dbReference type="PANTHER" id="PTHR43445:SF3">
    <property type="entry name" value="UDP-N-ACETYLMURAMATE--L-ALANINE LIGASE"/>
    <property type="match status" value="1"/>
</dbReference>
<dbReference type="PANTHER" id="PTHR43445">
    <property type="entry name" value="UDP-N-ACETYLMURAMATE--L-ALANINE LIGASE-RELATED"/>
    <property type="match status" value="1"/>
</dbReference>
<dbReference type="Pfam" id="PF01225">
    <property type="entry name" value="Mur_ligase"/>
    <property type="match status" value="1"/>
</dbReference>
<dbReference type="Pfam" id="PF02875">
    <property type="entry name" value="Mur_ligase_C"/>
    <property type="match status" value="1"/>
</dbReference>
<dbReference type="Pfam" id="PF08245">
    <property type="entry name" value="Mur_ligase_M"/>
    <property type="match status" value="1"/>
</dbReference>
<dbReference type="SUPFAM" id="SSF51984">
    <property type="entry name" value="MurCD N-terminal domain"/>
    <property type="match status" value="1"/>
</dbReference>
<dbReference type="SUPFAM" id="SSF53623">
    <property type="entry name" value="MurD-like peptide ligases, catalytic domain"/>
    <property type="match status" value="1"/>
</dbReference>
<dbReference type="SUPFAM" id="SSF53244">
    <property type="entry name" value="MurD-like peptide ligases, peptide-binding domain"/>
    <property type="match status" value="1"/>
</dbReference>
<keyword id="KW-0067">ATP-binding</keyword>
<keyword id="KW-0131">Cell cycle</keyword>
<keyword id="KW-0132">Cell division</keyword>
<keyword id="KW-0133">Cell shape</keyword>
<keyword id="KW-0961">Cell wall biogenesis/degradation</keyword>
<keyword id="KW-0963">Cytoplasm</keyword>
<keyword id="KW-0436">Ligase</keyword>
<keyword id="KW-0547">Nucleotide-binding</keyword>
<keyword id="KW-0573">Peptidoglycan synthesis</keyword>
<keyword id="KW-1185">Reference proteome</keyword>
<protein>
    <recommendedName>
        <fullName evidence="1">UDP-N-acetylmuramate--L-alanine ligase</fullName>
        <ecNumber evidence="1">6.3.2.8</ecNumber>
    </recommendedName>
    <alternativeName>
        <fullName evidence="1">UDP-N-acetylmuramoyl-L-alanine synthetase</fullName>
    </alternativeName>
</protein>
<accession>Q32K01</accession>
<comment type="function">
    <text evidence="1">Cell wall formation.</text>
</comment>
<comment type="catalytic activity">
    <reaction evidence="1">
        <text>UDP-N-acetyl-alpha-D-muramate + L-alanine + ATP = UDP-N-acetyl-alpha-D-muramoyl-L-alanine + ADP + phosphate + H(+)</text>
        <dbReference type="Rhea" id="RHEA:23372"/>
        <dbReference type="ChEBI" id="CHEBI:15378"/>
        <dbReference type="ChEBI" id="CHEBI:30616"/>
        <dbReference type="ChEBI" id="CHEBI:43474"/>
        <dbReference type="ChEBI" id="CHEBI:57972"/>
        <dbReference type="ChEBI" id="CHEBI:70757"/>
        <dbReference type="ChEBI" id="CHEBI:83898"/>
        <dbReference type="ChEBI" id="CHEBI:456216"/>
        <dbReference type="EC" id="6.3.2.8"/>
    </reaction>
</comment>
<comment type="pathway">
    <text evidence="1">Cell wall biogenesis; peptidoglycan biosynthesis.</text>
</comment>
<comment type="subcellular location">
    <subcellularLocation>
        <location evidence="1">Cytoplasm</location>
    </subcellularLocation>
</comment>
<comment type="similarity">
    <text evidence="1">Belongs to the MurCDEF family.</text>
</comment>
<reference key="1">
    <citation type="journal article" date="2005" name="Nucleic Acids Res.">
        <title>Genome dynamics and diversity of Shigella species, the etiologic agents of bacillary dysentery.</title>
        <authorList>
            <person name="Yang F."/>
            <person name="Yang J."/>
            <person name="Zhang X."/>
            <person name="Chen L."/>
            <person name="Jiang Y."/>
            <person name="Yan Y."/>
            <person name="Tang X."/>
            <person name="Wang J."/>
            <person name="Xiong Z."/>
            <person name="Dong J."/>
            <person name="Xue Y."/>
            <person name="Zhu Y."/>
            <person name="Xu X."/>
            <person name="Sun L."/>
            <person name="Chen S."/>
            <person name="Nie H."/>
            <person name="Peng J."/>
            <person name="Xu J."/>
            <person name="Wang Y."/>
            <person name="Yuan Z."/>
            <person name="Wen Y."/>
            <person name="Yao Z."/>
            <person name="Shen Y."/>
            <person name="Qiang B."/>
            <person name="Hou Y."/>
            <person name="Yu J."/>
            <person name="Jin Q."/>
        </authorList>
    </citation>
    <scope>NUCLEOTIDE SEQUENCE [LARGE SCALE GENOMIC DNA]</scope>
    <source>
        <strain>Sd197</strain>
    </source>
</reference>
<sequence>MNTQQLAKLRSIVPEMRRVRHIHFVGIGGAGMGGIAEVLANEGYQISGSDLAPNPVTQQLMNLGVTIYFNHRPENVRDASVVVVSSAISADNPEIVAAHEARIPVIRRAEMLAELMRFRHGIAIAGTHGKTTTTAMVSSIYAEAGLDPTFVNGGLVKAAGVHARLGHGRYLIAEADESDASFLHLQPMVAIVTNIEADHMDTYQGDFENLKQTFINFLHNLPFYGRAVMCVDDPVIRELLPRVGRQTTTYGFSEDADVRVEDYQQIGPQGHFTLLRQDKEPIRVTLNAPGRHNALNAAAAVAVATEEGIDDEAILRALESFQGTGRRFDFLGEFPLAPVNGKSGTAMLVDDYGHHPTEVDATIKAARAGWPDKNLVMLFQPHRFTRTRDLYDDFANVLTQVDTLLMLEVYPAGEAPIPGADSRSLCRTIRGRGKIDPILVPDPAQVAEMLAPVLTGNDLILVQGAGNIGKIARSLAEIKLKPQTPEEEQHD</sequence>
<proteinExistence type="inferred from homology"/>
<name>MURC_SHIDS</name>
<organism>
    <name type="scientific">Shigella dysenteriae serotype 1 (strain Sd197)</name>
    <dbReference type="NCBI Taxonomy" id="300267"/>
    <lineage>
        <taxon>Bacteria</taxon>
        <taxon>Pseudomonadati</taxon>
        <taxon>Pseudomonadota</taxon>
        <taxon>Gammaproteobacteria</taxon>
        <taxon>Enterobacterales</taxon>
        <taxon>Enterobacteriaceae</taxon>
        <taxon>Shigella</taxon>
    </lineage>
</organism>
<evidence type="ECO:0000255" key="1">
    <source>
        <dbReference type="HAMAP-Rule" id="MF_00046"/>
    </source>
</evidence>
<gene>
    <name evidence="1" type="primary">murC</name>
    <name type="ordered locus">SDY_0121</name>
</gene>
<feature type="chain" id="PRO_0000242594" description="UDP-N-acetylmuramate--L-alanine ligase">
    <location>
        <begin position="1"/>
        <end position="491"/>
    </location>
</feature>
<feature type="binding site" evidence="1">
    <location>
        <begin position="126"/>
        <end position="132"/>
    </location>
    <ligand>
        <name>ATP</name>
        <dbReference type="ChEBI" id="CHEBI:30616"/>
    </ligand>
</feature>